<comment type="function">
    <text evidence="1">Prevents the cell division inhibition by proteins MinC and MinD at internal division sites while permitting inhibition at polar sites. This ensures cell division at the proper site by restricting the formation of a division septum at the midpoint of the long axis of the cell.</text>
</comment>
<comment type="similarity">
    <text evidence="1">Belongs to the MinE family.</text>
</comment>
<organism>
    <name type="scientific">Wigglesworthia glossinidia brevipalpis</name>
    <dbReference type="NCBI Taxonomy" id="36870"/>
    <lineage>
        <taxon>Bacteria</taxon>
        <taxon>Pseudomonadati</taxon>
        <taxon>Pseudomonadota</taxon>
        <taxon>Gammaproteobacteria</taxon>
        <taxon>Enterobacterales</taxon>
        <taxon>Erwiniaceae</taxon>
        <taxon>Wigglesworthia</taxon>
    </lineage>
</organism>
<gene>
    <name evidence="1" type="primary">minE</name>
    <name type="ordered locus">WIGBR3730</name>
</gene>
<dbReference type="EMBL" id="BA000021">
    <property type="protein sequence ID" value="BAC24519.1"/>
    <property type="molecule type" value="Genomic_DNA"/>
</dbReference>
<dbReference type="SMR" id="Q8D2I1"/>
<dbReference type="STRING" id="36870.gene:10368873"/>
<dbReference type="KEGG" id="wbr:minE"/>
<dbReference type="eggNOG" id="COG0851">
    <property type="taxonomic scope" value="Bacteria"/>
</dbReference>
<dbReference type="HOGENOM" id="CLU_137929_2_2_6"/>
<dbReference type="OrthoDB" id="9802655at2"/>
<dbReference type="Proteomes" id="UP000000562">
    <property type="component" value="Chromosome"/>
</dbReference>
<dbReference type="GO" id="GO:0051301">
    <property type="term" value="P:cell division"/>
    <property type="evidence" value="ECO:0007669"/>
    <property type="project" value="UniProtKB-KW"/>
</dbReference>
<dbReference type="GO" id="GO:0032955">
    <property type="term" value="P:regulation of division septum assembly"/>
    <property type="evidence" value="ECO:0007669"/>
    <property type="project" value="InterPro"/>
</dbReference>
<dbReference type="FunFam" id="3.30.1070.10:FF:000001">
    <property type="entry name" value="Cell division topological specificity factor"/>
    <property type="match status" value="1"/>
</dbReference>
<dbReference type="Gene3D" id="3.30.1070.10">
    <property type="entry name" value="Cell division topological specificity factor MinE"/>
    <property type="match status" value="1"/>
</dbReference>
<dbReference type="HAMAP" id="MF_00262">
    <property type="entry name" value="MinE"/>
    <property type="match status" value="1"/>
</dbReference>
<dbReference type="InterPro" id="IPR005527">
    <property type="entry name" value="MinE"/>
</dbReference>
<dbReference type="InterPro" id="IPR036707">
    <property type="entry name" value="MinE_sf"/>
</dbReference>
<dbReference type="NCBIfam" id="TIGR01215">
    <property type="entry name" value="minE"/>
    <property type="match status" value="1"/>
</dbReference>
<dbReference type="NCBIfam" id="NF001422">
    <property type="entry name" value="PRK00296.1"/>
    <property type="match status" value="1"/>
</dbReference>
<dbReference type="Pfam" id="PF03776">
    <property type="entry name" value="MinE"/>
    <property type="match status" value="1"/>
</dbReference>
<dbReference type="SUPFAM" id="SSF55229">
    <property type="entry name" value="Cell division protein MinE topological specificity domain"/>
    <property type="match status" value="1"/>
</dbReference>
<protein>
    <recommendedName>
        <fullName evidence="1">Cell division topological specificity factor</fullName>
    </recommendedName>
</protein>
<name>MINE_WIGBR</name>
<evidence type="ECO:0000255" key="1">
    <source>
        <dbReference type="HAMAP-Rule" id="MF_00262"/>
    </source>
</evidence>
<reference key="1">
    <citation type="journal article" date="2002" name="Nat. Genet.">
        <title>Genome sequence of the endocellular obligate symbiont of tsetse flies, Wigglesworthia glossinidia.</title>
        <authorList>
            <person name="Akman L."/>
            <person name="Yamashita A."/>
            <person name="Watanabe H."/>
            <person name="Oshima K."/>
            <person name="Shiba T."/>
            <person name="Hattori M."/>
            <person name="Aksoy S."/>
        </authorList>
    </citation>
    <scope>NUCLEOTIDE SEQUENCE [LARGE SCALE GENOMIC DNA]</scope>
</reference>
<accession>Q8D2I1</accession>
<proteinExistence type="inferred from homology"/>
<feature type="chain" id="PRO_0000205894" description="Cell division topological specificity factor">
    <location>
        <begin position="1"/>
        <end position="91"/>
    </location>
</feature>
<keyword id="KW-0131">Cell cycle</keyword>
<keyword id="KW-0132">Cell division</keyword>
<keyword id="KW-1185">Reference proteome</keyword>
<sequence>MALLKFFISKKEITSDIAKERLQIIVSEQRKNSKEPNYLPMLKKDLIKVIKKYINLNSETLCVKLDHKNKKNIKIFELNIVFPEKNFLNKK</sequence>